<sequence length="292" mass="31859">MDKVKIALQYMLPKHLLSRLVGKLAAAEAGALTTAAIKWFIKQYKIDMSEAAQSEPEAYKSFNAFFTRALKPGIRPLDMDADIMVHPVDGAVSQLGPIKNGRIFQAKGHHYSSLTLLGDQAEDAKRFEGGDFATIYLAPKDYHRIHMPIKGTLSKMTYVPGELFSVNPLTARNVPGLFARNERVVAIFETELGPLAMVLVGATIVASIETVWAGTVTPPTGKQVFTWEYPTQGPDAITLDKGEEMGRFKLGSTVVMLFAKDAIATFAEGVEAEAVTRMGQAFANLKDVKHAD</sequence>
<reference key="1">
    <citation type="submission" date="2007-11" db="EMBL/GenBank/DDBJ databases">
        <title>Complete sequence of chromosome of Shewanella baltica OS195.</title>
        <authorList>
            <consortium name="US DOE Joint Genome Institute"/>
            <person name="Copeland A."/>
            <person name="Lucas S."/>
            <person name="Lapidus A."/>
            <person name="Barry K."/>
            <person name="Glavina del Rio T."/>
            <person name="Dalin E."/>
            <person name="Tice H."/>
            <person name="Pitluck S."/>
            <person name="Chain P."/>
            <person name="Malfatti S."/>
            <person name="Shin M."/>
            <person name="Vergez L."/>
            <person name="Schmutz J."/>
            <person name="Larimer F."/>
            <person name="Land M."/>
            <person name="Hauser L."/>
            <person name="Kyrpides N."/>
            <person name="Kim E."/>
            <person name="Brettar I."/>
            <person name="Rodrigues J."/>
            <person name="Konstantinidis K."/>
            <person name="Klappenbach J."/>
            <person name="Hofle M."/>
            <person name="Tiedje J."/>
            <person name="Richardson P."/>
        </authorList>
    </citation>
    <scope>NUCLEOTIDE SEQUENCE [LARGE SCALE GENOMIC DNA]</scope>
    <source>
        <strain>OS195</strain>
    </source>
</reference>
<accession>A9L3W8</accession>
<proteinExistence type="inferred from homology"/>
<dbReference type="EC" id="4.1.1.65" evidence="1"/>
<dbReference type="EMBL" id="CP000891">
    <property type="protein sequence ID" value="ABX51062.1"/>
    <property type="molecule type" value="Genomic_DNA"/>
</dbReference>
<dbReference type="SMR" id="A9L3W8"/>
<dbReference type="KEGG" id="sbn:Sbal195_3902"/>
<dbReference type="HOGENOM" id="CLU_029061_4_1_6"/>
<dbReference type="UniPathway" id="UPA00558">
    <property type="reaction ID" value="UER00616"/>
</dbReference>
<dbReference type="Proteomes" id="UP000000770">
    <property type="component" value="Chromosome"/>
</dbReference>
<dbReference type="GO" id="GO:0005886">
    <property type="term" value="C:plasma membrane"/>
    <property type="evidence" value="ECO:0007669"/>
    <property type="project" value="UniProtKB-SubCell"/>
</dbReference>
<dbReference type="GO" id="GO:0004609">
    <property type="term" value="F:phosphatidylserine decarboxylase activity"/>
    <property type="evidence" value="ECO:0007669"/>
    <property type="project" value="UniProtKB-UniRule"/>
</dbReference>
<dbReference type="GO" id="GO:0006646">
    <property type="term" value="P:phosphatidylethanolamine biosynthetic process"/>
    <property type="evidence" value="ECO:0007669"/>
    <property type="project" value="UniProtKB-UniRule"/>
</dbReference>
<dbReference type="HAMAP" id="MF_00662">
    <property type="entry name" value="PS_decarb_PSD_B_type1"/>
    <property type="match status" value="1"/>
</dbReference>
<dbReference type="InterPro" id="IPR003817">
    <property type="entry name" value="PS_Dcarbxylase"/>
</dbReference>
<dbReference type="InterPro" id="IPR033177">
    <property type="entry name" value="PSD-B"/>
</dbReference>
<dbReference type="InterPro" id="IPR033178">
    <property type="entry name" value="PSD_type1_pro"/>
</dbReference>
<dbReference type="NCBIfam" id="TIGR00163">
    <property type="entry name" value="PS_decarb"/>
    <property type="match status" value="1"/>
</dbReference>
<dbReference type="PANTHER" id="PTHR10067">
    <property type="entry name" value="PHOSPHATIDYLSERINE DECARBOXYLASE"/>
    <property type="match status" value="1"/>
</dbReference>
<dbReference type="PANTHER" id="PTHR10067:SF6">
    <property type="entry name" value="PHOSPHATIDYLSERINE DECARBOXYLASE PROENZYME, MITOCHONDRIAL"/>
    <property type="match status" value="1"/>
</dbReference>
<dbReference type="Pfam" id="PF02666">
    <property type="entry name" value="PS_Dcarbxylase"/>
    <property type="match status" value="1"/>
</dbReference>
<protein>
    <recommendedName>
        <fullName evidence="1">Phosphatidylserine decarboxylase proenzyme</fullName>
        <ecNumber evidence="1">4.1.1.65</ecNumber>
    </recommendedName>
    <component>
        <recommendedName>
            <fullName evidence="1">Phosphatidylserine decarboxylase alpha chain</fullName>
        </recommendedName>
    </component>
    <component>
        <recommendedName>
            <fullName evidence="1">Phosphatidylserine decarboxylase beta chain</fullName>
        </recommendedName>
    </component>
</protein>
<gene>
    <name evidence="1" type="primary">psd</name>
    <name type="ordered locus">Sbal195_3902</name>
</gene>
<organism>
    <name type="scientific">Shewanella baltica (strain OS195)</name>
    <dbReference type="NCBI Taxonomy" id="399599"/>
    <lineage>
        <taxon>Bacteria</taxon>
        <taxon>Pseudomonadati</taxon>
        <taxon>Pseudomonadota</taxon>
        <taxon>Gammaproteobacteria</taxon>
        <taxon>Alteromonadales</taxon>
        <taxon>Shewanellaceae</taxon>
        <taxon>Shewanella</taxon>
    </lineage>
</organism>
<name>PSD_SHEB9</name>
<feature type="chain" id="PRO_1000082902" description="Phosphatidylserine decarboxylase beta chain" evidence="1">
    <location>
        <begin position="1"/>
        <end position="251"/>
    </location>
</feature>
<feature type="chain" id="PRO_1000082903" description="Phosphatidylserine decarboxylase alpha chain" evidence="1">
    <location>
        <begin position="252"/>
        <end position="292"/>
    </location>
</feature>
<feature type="active site" description="Charge relay system; for autoendoproteolytic cleavage activity" evidence="1">
    <location>
        <position position="89"/>
    </location>
</feature>
<feature type="active site" description="Charge relay system; for autoendoproteolytic cleavage activity" evidence="1">
    <location>
        <position position="146"/>
    </location>
</feature>
<feature type="active site" description="Charge relay system; for autoendoproteolytic cleavage activity" evidence="1">
    <location>
        <position position="252"/>
    </location>
</feature>
<feature type="active site" description="Schiff-base intermediate with substrate; via pyruvic acid; for decarboxylase activity" evidence="1">
    <location>
        <position position="252"/>
    </location>
</feature>
<feature type="site" description="Cleavage (non-hydrolytic); by autocatalysis" evidence="1">
    <location>
        <begin position="251"/>
        <end position="252"/>
    </location>
</feature>
<feature type="modified residue" description="Pyruvic acid (Ser); by autocatalysis" evidence="1">
    <location>
        <position position="252"/>
    </location>
</feature>
<keyword id="KW-1003">Cell membrane</keyword>
<keyword id="KW-0210">Decarboxylase</keyword>
<keyword id="KW-0444">Lipid biosynthesis</keyword>
<keyword id="KW-0443">Lipid metabolism</keyword>
<keyword id="KW-0456">Lyase</keyword>
<keyword id="KW-0472">Membrane</keyword>
<keyword id="KW-0594">Phospholipid biosynthesis</keyword>
<keyword id="KW-1208">Phospholipid metabolism</keyword>
<keyword id="KW-0670">Pyruvate</keyword>
<keyword id="KW-0865">Zymogen</keyword>
<evidence type="ECO:0000255" key="1">
    <source>
        <dbReference type="HAMAP-Rule" id="MF_00662"/>
    </source>
</evidence>
<comment type="function">
    <text evidence="1">Catalyzes the formation of phosphatidylethanolamine (PtdEtn) from phosphatidylserine (PtdSer).</text>
</comment>
<comment type="catalytic activity">
    <reaction evidence="1">
        <text>a 1,2-diacyl-sn-glycero-3-phospho-L-serine + H(+) = a 1,2-diacyl-sn-glycero-3-phosphoethanolamine + CO2</text>
        <dbReference type="Rhea" id="RHEA:20828"/>
        <dbReference type="ChEBI" id="CHEBI:15378"/>
        <dbReference type="ChEBI" id="CHEBI:16526"/>
        <dbReference type="ChEBI" id="CHEBI:57262"/>
        <dbReference type="ChEBI" id="CHEBI:64612"/>
        <dbReference type="EC" id="4.1.1.65"/>
    </reaction>
</comment>
<comment type="cofactor">
    <cofactor evidence="1">
        <name>pyruvate</name>
        <dbReference type="ChEBI" id="CHEBI:15361"/>
    </cofactor>
    <text evidence="1">Binds 1 pyruvoyl group covalently per subunit.</text>
</comment>
<comment type="pathway">
    <text evidence="1">Phospholipid metabolism; phosphatidylethanolamine biosynthesis; phosphatidylethanolamine from CDP-diacylglycerol: step 2/2.</text>
</comment>
<comment type="subunit">
    <text evidence="1">Heterodimer of a large membrane-associated beta subunit and a small pyruvoyl-containing alpha subunit.</text>
</comment>
<comment type="subcellular location">
    <subcellularLocation>
        <location evidence="1">Cell membrane</location>
        <topology evidence="1">Peripheral membrane protein</topology>
    </subcellularLocation>
</comment>
<comment type="PTM">
    <text evidence="1">Is synthesized initially as an inactive proenzyme. Formation of the active enzyme involves a self-maturation process in which the active site pyruvoyl group is generated from an internal serine residue via an autocatalytic post-translational modification. Two non-identical subunits are generated from the proenzyme in this reaction, and the pyruvate is formed at the N-terminus of the alpha chain, which is derived from the carboxyl end of the proenzyme. The autoendoproteolytic cleavage occurs by a canonical serine protease mechanism, in which the side chain hydroxyl group of the serine supplies its oxygen atom to form the C-terminus of the beta chain, while the remainder of the serine residue undergoes an oxidative deamination to produce ammonia and the pyruvoyl prosthetic group on the alpha chain. During this reaction, the Ser that is part of the protease active site of the proenzyme becomes the pyruvoyl prosthetic group, which constitutes an essential element of the active site of the mature decarboxylase.</text>
</comment>
<comment type="similarity">
    <text evidence="1">Belongs to the phosphatidylserine decarboxylase family. PSD-B subfamily. Prokaryotic type I sub-subfamily.</text>
</comment>